<organism>
    <name type="scientific">Mus musculus</name>
    <name type="common">Mouse</name>
    <dbReference type="NCBI Taxonomy" id="10090"/>
    <lineage>
        <taxon>Eukaryota</taxon>
        <taxon>Metazoa</taxon>
        <taxon>Chordata</taxon>
        <taxon>Craniata</taxon>
        <taxon>Vertebrata</taxon>
        <taxon>Euteleostomi</taxon>
        <taxon>Mammalia</taxon>
        <taxon>Eutheria</taxon>
        <taxon>Euarchontoglires</taxon>
        <taxon>Glires</taxon>
        <taxon>Rodentia</taxon>
        <taxon>Myomorpha</taxon>
        <taxon>Muroidea</taxon>
        <taxon>Muridae</taxon>
        <taxon>Murinae</taxon>
        <taxon>Mus</taxon>
        <taxon>Mus</taxon>
    </lineage>
</organism>
<accession>Q9CWY8</accession>
<accession>Q8CHY8</accession>
<name>RNH2A_MOUSE</name>
<protein>
    <recommendedName>
        <fullName>Ribonuclease H2 subunit A</fullName>
        <shortName>RNase H2 subunit A</shortName>
        <ecNumber>3.1.26.4</ecNumber>
    </recommendedName>
    <alternativeName>
        <fullName>Ribonuclease HI large subunit</fullName>
        <shortName>RNase HI large subunit</shortName>
    </alternativeName>
    <alternativeName>
        <fullName>Ribonuclease HI subunit A</fullName>
    </alternativeName>
</protein>
<keyword id="KW-0002">3D-structure</keyword>
<keyword id="KW-0007">Acetylation</keyword>
<keyword id="KW-0255">Endonuclease</keyword>
<keyword id="KW-0378">Hydrolase</keyword>
<keyword id="KW-0479">Metal-binding</keyword>
<keyword id="KW-0540">Nuclease</keyword>
<keyword id="KW-0539">Nucleus</keyword>
<keyword id="KW-0597">Phosphoprotein</keyword>
<keyword id="KW-1185">Reference proteome</keyword>
<sequence length="301" mass="33513">MDLSELERDNTGRCRLSSPVPAVCLKEPCVLGVDEAGRGPVLGPMVYAICYCPLSRLADLEALKVADSKTLTENERERLFAKMEEDGDFVGWALDVLSPNLISTSMLGRVKYNLNSLSHDTAAGLIQYALDQNVNVTQVFVDTVGMPETYQARLQQHFPGIEVTVKAKADSLFPVVSAASIFAKVARDKAVKNWQFVENLQDLDSDYGSGYPNDPKTKAWLRKHVDPVFGFPQFVRFSWSTAQAILEKEAEDVIWEDSEAEEDPERPGKITSYFSQGPQTCRPQAPHRYFQERGLEAASSL</sequence>
<proteinExistence type="evidence at protein level"/>
<evidence type="ECO:0000250" key="1"/>
<evidence type="ECO:0000250" key="2">
    <source>
        <dbReference type="UniProtKB" id="O75792"/>
    </source>
</evidence>
<evidence type="ECO:0000255" key="3">
    <source>
        <dbReference type="PROSITE-ProRule" id="PRU01319"/>
    </source>
</evidence>
<evidence type="ECO:0000256" key="4">
    <source>
        <dbReference type="SAM" id="MobiDB-lite"/>
    </source>
</evidence>
<evidence type="ECO:0000269" key="5">
    <source>
    </source>
</evidence>
<evidence type="ECO:0000305" key="6"/>
<evidence type="ECO:0007744" key="7">
    <source>
    </source>
</evidence>
<evidence type="ECO:0007744" key="8">
    <source>
    </source>
</evidence>
<evidence type="ECO:0007829" key="9">
    <source>
        <dbReference type="PDB" id="3KIO"/>
    </source>
</evidence>
<evidence type="ECO:0007829" key="10">
    <source>
        <dbReference type="PDB" id="3P5J"/>
    </source>
</evidence>
<reference key="1">
    <citation type="journal article" date="2005" name="Science">
        <title>The transcriptional landscape of the mammalian genome.</title>
        <authorList>
            <person name="Carninci P."/>
            <person name="Kasukawa T."/>
            <person name="Katayama S."/>
            <person name="Gough J."/>
            <person name="Frith M.C."/>
            <person name="Maeda N."/>
            <person name="Oyama R."/>
            <person name="Ravasi T."/>
            <person name="Lenhard B."/>
            <person name="Wells C."/>
            <person name="Kodzius R."/>
            <person name="Shimokawa K."/>
            <person name="Bajic V.B."/>
            <person name="Brenner S.E."/>
            <person name="Batalov S."/>
            <person name="Forrest A.R."/>
            <person name="Zavolan M."/>
            <person name="Davis M.J."/>
            <person name="Wilming L.G."/>
            <person name="Aidinis V."/>
            <person name="Allen J.E."/>
            <person name="Ambesi-Impiombato A."/>
            <person name="Apweiler R."/>
            <person name="Aturaliya R.N."/>
            <person name="Bailey T.L."/>
            <person name="Bansal M."/>
            <person name="Baxter L."/>
            <person name="Beisel K.W."/>
            <person name="Bersano T."/>
            <person name="Bono H."/>
            <person name="Chalk A.M."/>
            <person name="Chiu K.P."/>
            <person name="Choudhary V."/>
            <person name="Christoffels A."/>
            <person name="Clutterbuck D.R."/>
            <person name="Crowe M.L."/>
            <person name="Dalla E."/>
            <person name="Dalrymple B.P."/>
            <person name="de Bono B."/>
            <person name="Della Gatta G."/>
            <person name="di Bernardo D."/>
            <person name="Down T."/>
            <person name="Engstrom P."/>
            <person name="Fagiolini M."/>
            <person name="Faulkner G."/>
            <person name="Fletcher C.F."/>
            <person name="Fukushima T."/>
            <person name="Furuno M."/>
            <person name="Futaki S."/>
            <person name="Gariboldi M."/>
            <person name="Georgii-Hemming P."/>
            <person name="Gingeras T.R."/>
            <person name="Gojobori T."/>
            <person name="Green R.E."/>
            <person name="Gustincich S."/>
            <person name="Harbers M."/>
            <person name="Hayashi Y."/>
            <person name="Hensch T.K."/>
            <person name="Hirokawa N."/>
            <person name="Hill D."/>
            <person name="Huminiecki L."/>
            <person name="Iacono M."/>
            <person name="Ikeo K."/>
            <person name="Iwama A."/>
            <person name="Ishikawa T."/>
            <person name="Jakt M."/>
            <person name="Kanapin A."/>
            <person name="Katoh M."/>
            <person name="Kawasawa Y."/>
            <person name="Kelso J."/>
            <person name="Kitamura H."/>
            <person name="Kitano H."/>
            <person name="Kollias G."/>
            <person name="Krishnan S.P."/>
            <person name="Kruger A."/>
            <person name="Kummerfeld S.K."/>
            <person name="Kurochkin I.V."/>
            <person name="Lareau L.F."/>
            <person name="Lazarevic D."/>
            <person name="Lipovich L."/>
            <person name="Liu J."/>
            <person name="Liuni S."/>
            <person name="McWilliam S."/>
            <person name="Madan Babu M."/>
            <person name="Madera M."/>
            <person name="Marchionni L."/>
            <person name="Matsuda H."/>
            <person name="Matsuzawa S."/>
            <person name="Miki H."/>
            <person name="Mignone F."/>
            <person name="Miyake S."/>
            <person name="Morris K."/>
            <person name="Mottagui-Tabar S."/>
            <person name="Mulder N."/>
            <person name="Nakano N."/>
            <person name="Nakauchi H."/>
            <person name="Ng P."/>
            <person name="Nilsson R."/>
            <person name="Nishiguchi S."/>
            <person name="Nishikawa S."/>
            <person name="Nori F."/>
            <person name="Ohara O."/>
            <person name="Okazaki Y."/>
            <person name="Orlando V."/>
            <person name="Pang K.C."/>
            <person name="Pavan W.J."/>
            <person name="Pavesi G."/>
            <person name="Pesole G."/>
            <person name="Petrovsky N."/>
            <person name="Piazza S."/>
            <person name="Reed J."/>
            <person name="Reid J.F."/>
            <person name="Ring B.Z."/>
            <person name="Ringwald M."/>
            <person name="Rost B."/>
            <person name="Ruan Y."/>
            <person name="Salzberg S.L."/>
            <person name="Sandelin A."/>
            <person name="Schneider C."/>
            <person name="Schoenbach C."/>
            <person name="Sekiguchi K."/>
            <person name="Semple C.A."/>
            <person name="Seno S."/>
            <person name="Sessa L."/>
            <person name="Sheng Y."/>
            <person name="Shibata Y."/>
            <person name="Shimada H."/>
            <person name="Shimada K."/>
            <person name="Silva D."/>
            <person name="Sinclair B."/>
            <person name="Sperling S."/>
            <person name="Stupka E."/>
            <person name="Sugiura K."/>
            <person name="Sultana R."/>
            <person name="Takenaka Y."/>
            <person name="Taki K."/>
            <person name="Tammoja K."/>
            <person name="Tan S.L."/>
            <person name="Tang S."/>
            <person name="Taylor M.S."/>
            <person name="Tegner J."/>
            <person name="Teichmann S.A."/>
            <person name="Ueda H.R."/>
            <person name="van Nimwegen E."/>
            <person name="Verardo R."/>
            <person name="Wei C.L."/>
            <person name="Yagi K."/>
            <person name="Yamanishi H."/>
            <person name="Zabarovsky E."/>
            <person name="Zhu S."/>
            <person name="Zimmer A."/>
            <person name="Hide W."/>
            <person name="Bult C."/>
            <person name="Grimmond S.M."/>
            <person name="Teasdale R.D."/>
            <person name="Liu E.T."/>
            <person name="Brusic V."/>
            <person name="Quackenbush J."/>
            <person name="Wahlestedt C."/>
            <person name="Mattick J.S."/>
            <person name="Hume D.A."/>
            <person name="Kai C."/>
            <person name="Sasaki D."/>
            <person name="Tomaru Y."/>
            <person name="Fukuda S."/>
            <person name="Kanamori-Katayama M."/>
            <person name="Suzuki M."/>
            <person name="Aoki J."/>
            <person name="Arakawa T."/>
            <person name="Iida J."/>
            <person name="Imamura K."/>
            <person name="Itoh M."/>
            <person name="Kato T."/>
            <person name="Kawaji H."/>
            <person name="Kawagashira N."/>
            <person name="Kawashima T."/>
            <person name="Kojima M."/>
            <person name="Kondo S."/>
            <person name="Konno H."/>
            <person name="Nakano K."/>
            <person name="Ninomiya N."/>
            <person name="Nishio T."/>
            <person name="Okada M."/>
            <person name="Plessy C."/>
            <person name="Shibata K."/>
            <person name="Shiraki T."/>
            <person name="Suzuki S."/>
            <person name="Tagami M."/>
            <person name="Waki K."/>
            <person name="Watahiki A."/>
            <person name="Okamura-Oho Y."/>
            <person name="Suzuki H."/>
            <person name="Kawai J."/>
            <person name="Hayashizaki Y."/>
        </authorList>
    </citation>
    <scope>NUCLEOTIDE SEQUENCE [LARGE SCALE MRNA]</scope>
    <source>
        <strain>C57BL/6J</strain>
        <tissue>Embryonic stem cell</tissue>
        <tissue>Kidney</tissue>
    </source>
</reference>
<reference key="2">
    <citation type="journal article" date="2004" name="Genome Res.">
        <title>The status, quality, and expansion of the NIH full-length cDNA project: the Mammalian Gene Collection (MGC).</title>
        <authorList>
            <consortium name="The MGC Project Team"/>
        </authorList>
    </citation>
    <scope>NUCLEOTIDE SEQUENCE [LARGE SCALE MRNA]</scope>
    <source>
        <strain>C57BL/6J</strain>
        <tissue>Mammary gland</tissue>
    </source>
</reference>
<reference key="3">
    <citation type="journal article" date="2007" name="Proc. Natl. Acad. Sci. U.S.A.">
        <title>Large-scale phosphorylation analysis of mouse liver.</title>
        <authorList>
            <person name="Villen J."/>
            <person name="Beausoleil S.A."/>
            <person name="Gerber S.A."/>
            <person name="Gygi S.P."/>
        </authorList>
    </citation>
    <scope>PHOSPHORYLATION [LARGE SCALE ANALYSIS] AT SER-258</scope>
    <scope>IDENTIFICATION BY MASS SPECTROMETRY [LARGE SCALE ANALYSIS]</scope>
    <source>
        <tissue>Liver</tissue>
    </source>
</reference>
<reference key="4">
    <citation type="journal article" date="2010" name="Cell">
        <title>A tissue-specific atlas of mouse protein phosphorylation and expression.</title>
        <authorList>
            <person name="Huttlin E.L."/>
            <person name="Jedrychowski M.P."/>
            <person name="Elias J.E."/>
            <person name="Goswami T."/>
            <person name="Rad R."/>
            <person name="Beausoleil S.A."/>
            <person name="Villen J."/>
            <person name="Haas W."/>
            <person name="Sowa M.E."/>
            <person name="Gygi S.P."/>
        </authorList>
    </citation>
    <scope>PHOSPHORYLATION [LARGE SCALE ANALYSIS] AT SER-258</scope>
    <scope>IDENTIFICATION BY MASS SPECTROMETRY [LARGE SCALE ANALYSIS]</scope>
    <source>
        <tissue>Kidney</tissue>
        <tissue>Spleen</tissue>
    </source>
</reference>
<reference key="5">
    <citation type="journal article" date="2010" name="J. Biol. Chem.">
        <title>The structure of the mammalian RNase H2 complex provides insight into RNA.NA hybrid processing to prevent immune dysfunction.</title>
        <authorList>
            <person name="Shaban N.M."/>
            <person name="Harvey S."/>
            <person name="Perrino F.W."/>
            <person name="Hollis T."/>
        </authorList>
    </citation>
    <scope>X-RAY CRYSTALLOGRAPHY (2.9 ANGSTROMS)</scope>
    <scope>FUNCTION</scope>
    <scope>CATALYTIC ACTIVITY</scope>
    <scope>SUBUNIT</scope>
    <scope>COFACTOR</scope>
    <scope>MUTAGENESIS OF ASP-34; GLU-35; GLY-37; ASP-142 AND ASP-170</scope>
</reference>
<comment type="function">
    <text evidence="5">Catalytic subunit of RNase HII, an endonuclease that specifically degrades the RNA of RNA:DNA hybrids. Participates in DNA replication, possibly by mediating the removal of lagging-strand Okazaki fragment RNA primers during DNA replication. Mediates the excision of single ribonucleotides from DNA:RNA duplexes.</text>
</comment>
<comment type="catalytic activity">
    <reaction evidence="5">
        <text>Endonucleolytic cleavage to 5'-phosphomonoester.</text>
        <dbReference type="EC" id="3.1.26.4"/>
    </reaction>
</comment>
<comment type="cofactor">
    <cofactor evidence="1">
        <name>Mn(2+)</name>
        <dbReference type="ChEBI" id="CHEBI:29035"/>
    </cofactor>
    <cofactor evidence="1">
        <name>Mg(2+)</name>
        <dbReference type="ChEBI" id="CHEBI:18420"/>
    </cofactor>
    <text evidence="1">Manganese or magnesium. Binds 1 divalent metal ion per monomer in the absence of substrate. May bind a second metal ion after substrate binding.</text>
</comment>
<comment type="subunit">
    <text evidence="5">The RNase H2 complex is a heterotrimer composed of the catalytic subunit RNASEH2A and the non-catalytic subunits RNASEH2B and RNASEH2C.</text>
</comment>
<comment type="subcellular location">
    <subcellularLocation>
        <location evidence="1">Nucleus</location>
    </subcellularLocation>
</comment>
<comment type="similarity">
    <text evidence="6">Belongs to the RNase HII family. Eukaryotic subfamily.</text>
</comment>
<gene>
    <name type="primary">Rnaseh2a</name>
    <name type="synonym">Rnasehi</name>
</gene>
<feature type="chain" id="PRO_0000111711" description="Ribonuclease H2 subunit A">
    <location>
        <begin position="1"/>
        <end position="301"/>
    </location>
</feature>
<feature type="domain" description="RNase H type-2" evidence="3">
    <location>
        <begin position="28"/>
        <end position="251"/>
    </location>
</feature>
<feature type="region of interest" description="Disordered" evidence="4">
    <location>
        <begin position="255"/>
        <end position="284"/>
    </location>
</feature>
<feature type="compositionally biased region" description="Acidic residues" evidence="4">
    <location>
        <begin position="255"/>
        <end position="264"/>
    </location>
</feature>
<feature type="compositionally biased region" description="Polar residues" evidence="4">
    <location>
        <begin position="272"/>
        <end position="282"/>
    </location>
</feature>
<feature type="binding site" evidence="6">
    <location>
        <position position="34"/>
    </location>
    <ligand>
        <name>a divalent metal cation</name>
        <dbReference type="ChEBI" id="CHEBI:60240"/>
    </ligand>
</feature>
<feature type="binding site" evidence="6">
    <location>
        <position position="35"/>
    </location>
    <ligand>
        <name>a divalent metal cation</name>
        <dbReference type="ChEBI" id="CHEBI:60240"/>
    </ligand>
</feature>
<feature type="binding site" evidence="6">
    <location>
        <position position="142"/>
    </location>
    <ligand>
        <name>a divalent metal cation</name>
        <dbReference type="ChEBI" id="CHEBI:60240"/>
    </ligand>
</feature>
<feature type="modified residue" description="N-acetylmethionine" evidence="2">
    <location>
        <position position="1"/>
    </location>
</feature>
<feature type="modified residue" description="Phosphothreonine" evidence="2">
    <location>
        <position position="217"/>
    </location>
</feature>
<feature type="modified residue" description="Phosphoserine" evidence="7 8">
    <location>
        <position position="258"/>
    </location>
</feature>
<feature type="mutagenesis site" description="Loss of enzyme activity." evidence="5">
    <original>D</original>
    <variation>N</variation>
    <location>
        <position position="34"/>
    </location>
</feature>
<feature type="mutagenesis site" description="Loss of enzyme activity." evidence="5">
    <original>E</original>
    <variation>A</variation>
    <location>
        <position position="35"/>
    </location>
</feature>
<feature type="mutagenesis site" description="Strongly reduced in vitro enzyme activity." evidence="5">
    <original>G</original>
    <variation>S</variation>
    <location>
        <position position="37"/>
    </location>
</feature>
<feature type="mutagenesis site" description="Loss of enzyme activity." evidence="5">
    <original>D</original>
    <variation>N</variation>
    <location>
        <position position="142"/>
    </location>
</feature>
<feature type="mutagenesis site" description="Loss of enzyme activity." evidence="5">
    <original>D</original>
    <variation>N</variation>
    <location>
        <position position="170"/>
    </location>
</feature>
<feature type="sequence conflict" description="In Ref. 1; BAB26828." evidence="6" ref="1">
    <original>Q</original>
    <variation>R</variation>
    <location>
        <position position="132"/>
    </location>
</feature>
<feature type="turn" evidence="9">
    <location>
        <begin position="3"/>
        <end position="6"/>
    </location>
</feature>
<feature type="helix" evidence="9">
    <location>
        <begin position="7"/>
        <end position="9"/>
    </location>
</feature>
<feature type="strand" evidence="9">
    <location>
        <begin position="11"/>
        <end position="17"/>
    </location>
</feature>
<feature type="helix" evidence="9">
    <location>
        <begin position="23"/>
        <end position="26"/>
    </location>
</feature>
<feature type="strand" evidence="9">
    <location>
        <begin position="29"/>
        <end position="36"/>
    </location>
</feature>
<feature type="strand" evidence="9">
    <location>
        <begin position="41"/>
        <end position="43"/>
    </location>
</feature>
<feature type="strand" evidence="9">
    <location>
        <begin position="45"/>
        <end position="53"/>
    </location>
</feature>
<feature type="helix" evidence="9">
    <location>
        <begin position="54"/>
        <end position="59"/>
    </location>
</feature>
<feature type="helix" evidence="9">
    <location>
        <begin position="60"/>
        <end position="64"/>
    </location>
</feature>
<feature type="helix" evidence="9">
    <location>
        <begin position="73"/>
        <end position="85"/>
    </location>
</feature>
<feature type="turn" evidence="9">
    <location>
        <begin position="86"/>
        <end position="89"/>
    </location>
</feature>
<feature type="strand" evidence="9">
    <location>
        <begin position="91"/>
        <end position="97"/>
    </location>
</feature>
<feature type="helix" evidence="9">
    <location>
        <begin position="99"/>
        <end position="106"/>
    </location>
</feature>
<feature type="strand" evidence="9">
    <location>
        <begin position="108"/>
        <end position="110"/>
    </location>
</feature>
<feature type="helix" evidence="9">
    <location>
        <begin position="114"/>
        <end position="131"/>
    </location>
</feature>
<feature type="strand" evidence="9">
    <location>
        <begin position="136"/>
        <end position="142"/>
    </location>
</feature>
<feature type="helix" evidence="9">
    <location>
        <begin position="148"/>
        <end position="156"/>
    </location>
</feature>
<feature type="strand" evidence="9">
    <location>
        <begin position="161"/>
        <end position="166"/>
    </location>
</feature>
<feature type="helix" evidence="9">
    <location>
        <begin position="169"/>
        <end position="171"/>
    </location>
</feature>
<feature type="helix" evidence="9">
    <location>
        <begin position="174"/>
        <end position="200"/>
    </location>
</feature>
<feature type="strand" evidence="9">
    <location>
        <begin position="209"/>
        <end position="211"/>
    </location>
</feature>
<feature type="helix" evidence="9">
    <location>
        <begin position="215"/>
        <end position="222"/>
    </location>
</feature>
<feature type="turn" evidence="9">
    <location>
        <begin position="227"/>
        <end position="229"/>
    </location>
</feature>
<feature type="helix" evidence="9">
    <location>
        <begin position="240"/>
        <end position="249"/>
    </location>
</feature>
<feature type="strand" evidence="10">
    <location>
        <begin position="253"/>
        <end position="255"/>
    </location>
</feature>
<feature type="helix" evidence="10">
    <location>
        <begin position="287"/>
        <end position="293"/>
    </location>
</feature>
<feature type="strand" evidence="10">
    <location>
        <begin position="295"/>
        <end position="297"/>
    </location>
</feature>
<dbReference type="EC" id="3.1.26.4"/>
<dbReference type="EMBL" id="AK010292">
    <property type="protein sequence ID" value="BAB26828.1"/>
    <property type="molecule type" value="mRNA"/>
</dbReference>
<dbReference type="EMBL" id="AK146518">
    <property type="protein sequence ID" value="BAE27230.1"/>
    <property type="molecule type" value="mRNA"/>
</dbReference>
<dbReference type="EMBL" id="BC038158">
    <property type="protein sequence ID" value="AAH38158.1"/>
    <property type="molecule type" value="mRNA"/>
</dbReference>
<dbReference type="CCDS" id="CCDS22486.1"/>
<dbReference type="RefSeq" id="NP_081463.1">
    <property type="nucleotide sequence ID" value="NM_027187.5"/>
</dbReference>
<dbReference type="RefSeq" id="XP_011246799.1">
    <property type="nucleotide sequence ID" value="XM_011248497.2"/>
</dbReference>
<dbReference type="RefSeq" id="XP_011246800.1">
    <property type="nucleotide sequence ID" value="XM_011248498.2"/>
</dbReference>
<dbReference type="PDB" id="3KIO">
    <property type="method" value="X-ray"/>
    <property type="resolution" value="2.90 A"/>
    <property type="chains" value="A=1-301"/>
</dbReference>
<dbReference type="PDB" id="3P5J">
    <property type="method" value="X-ray"/>
    <property type="resolution" value="2.90 A"/>
    <property type="chains" value="A=1-301"/>
</dbReference>
<dbReference type="PDBsum" id="3KIO"/>
<dbReference type="PDBsum" id="3P5J"/>
<dbReference type="SMR" id="Q9CWY8"/>
<dbReference type="BioGRID" id="213639">
    <property type="interactions" value="4"/>
</dbReference>
<dbReference type="ComplexPortal" id="CPX-2875">
    <property type="entry name" value="RNase H2 complex"/>
</dbReference>
<dbReference type="FunCoup" id="Q9CWY8">
    <property type="interactions" value="1629"/>
</dbReference>
<dbReference type="STRING" id="10090.ENSMUSP00000105358"/>
<dbReference type="iPTMnet" id="Q9CWY8"/>
<dbReference type="PhosphoSitePlus" id="Q9CWY8"/>
<dbReference type="jPOST" id="Q9CWY8"/>
<dbReference type="PaxDb" id="10090-ENSMUSP00000105358"/>
<dbReference type="PeptideAtlas" id="Q9CWY8"/>
<dbReference type="ProteomicsDB" id="299855"/>
<dbReference type="Pumba" id="Q9CWY8"/>
<dbReference type="Antibodypedia" id="13379">
    <property type="antibodies" value="185 antibodies from 29 providers"/>
</dbReference>
<dbReference type="DNASU" id="69724"/>
<dbReference type="Ensembl" id="ENSMUST00000109736.9">
    <property type="protein sequence ID" value="ENSMUSP00000105358.3"/>
    <property type="gene ID" value="ENSMUSG00000052926.17"/>
</dbReference>
<dbReference type="Ensembl" id="ENSMUST00000109738.10">
    <property type="protein sequence ID" value="ENSMUSP00000105360.4"/>
    <property type="gene ID" value="ENSMUSG00000052926.17"/>
</dbReference>
<dbReference type="Ensembl" id="ENSMUST00000147812.8">
    <property type="protein sequence ID" value="ENSMUSP00000120374.2"/>
    <property type="gene ID" value="ENSMUSG00000052926.17"/>
</dbReference>
<dbReference type="GeneID" id="69724"/>
<dbReference type="KEGG" id="mmu:69724"/>
<dbReference type="UCSC" id="uc009mok.1">
    <property type="organism name" value="mouse"/>
</dbReference>
<dbReference type="AGR" id="MGI:1916974"/>
<dbReference type="CTD" id="10535"/>
<dbReference type="MGI" id="MGI:1916974">
    <property type="gene designation" value="Rnaseh2a"/>
</dbReference>
<dbReference type="VEuPathDB" id="HostDB:ENSMUSG00000052926"/>
<dbReference type="eggNOG" id="KOG2299">
    <property type="taxonomic scope" value="Eukaryota"/>
</dbReference>
<dbReference type="GeneTree" id="ENSGT00390000010768"/>
<dbReference type="InParanoid" id="Q9CWY8"/>
<dbReference type="OMA" id="REECRFF"/>
<dbReference type="OrthoDB" id="7462577at2759"/>
<dbReference type="PhylomeDB" id="Q9CWY8"/>
<dbReference type="TreeFam" id="TF314302"/>
<dbReference type="BRENDA" id="3.1.26.4">
    <property type="organism ID" value="3474"/>
</dbReference>
<dbReference type="BioGRID-ORCS" id="69724">
    <property type="hits" value="40 hits in 115 CRISPR screens"/>
</dbReference>
<dbReference type="ChiTaRS" id="Rnaseh2a">
    <property type="organism name" value="mouse"/>
</dbReference>
<dbReference type="EvolutionaryTrace" id="Q9CWY8"/>
<dbReference type="PRO" id="PR:Q9CWY8"/>
<dbReference type="Proteomes" id="UP000000589">
    <property type="component" value="Chromosome 8"/>
</dbReference>
<dbReference type="RNAct" id="Q9CWY8">
    <property type="molecule type" value="protein"/>
</dbReference>
<dbReference type="Bgee" id="ENSMUSG00000052926">
    <property type="expression patterns" value="Expressed in seminiferous tubule of testis and 233 other cell types or tissues"/>
</dbReference>
<dbReference type="ExpressionAtlas" id="Q9CWY8">
    <property type="expression patterns" value="baseline and differential"/>
</dbReference>
<dbReference type="GO" id="GO:0005829">
    <property type="term" value="C:cytosol"/>
    <property type="evidence" value="ECO:0007669"/>
    <property type="project" value="Ensembl"/>
</dbReference>
<dbReference type="GO" id="GO:0005654">
    <property type="term" value="C:nucleoplasm"/>
    <property type="evidence" value="ECO:0007669"/>
    <property type="project" value="Ensembl"/>
</dbReference>
<dbReference type="GO" id="GO:0032299">
    <property type="term" value="C:ribonuclease H2 complex"/>
    <property type="evidence" value="ECO:0000314"/>
    <property type="project" value="MGI"/>
</dbReference>
<dbReference type="GO" id="GO:0046872">
    <property type="term" value="F:metal ion binding"/>
    <property type="evidence" value="ECO:0007669"/>
    <property type="project" value="UniProtKB-KW"/>
</dbReference>
<dbReference type="GO" id="GO:0003723">
    <property type="term" value="F:RNA binding"/>
    <property type="evidence" value="ECO:0007669"/>
    <property type="project" value="InterPro"/>
</dbReference>
<dbReference type="GO" id="GO:0004523">
    <property type="term" value="F:RNA-DNA hybrid ribonuclease activity"/>
    <property type="evidence" value="ECO:0000250"/>
    <property type="project" value="UniProtKB"/>
</dbReference>
<dbReference type="GO" id="GO:0006298">
    <property type="term" value="P:mismatch repair"/>
    <property type="evidence" value="ECO:0000315"/>
    <property type="project" value="MGI"/>
</dbReference>
<dbReference type="GO" id="GO:0006401">
    <property type="term" value="P:RNA catabolic process"/>
    <property type="evidence" value="ECO:0000250"/>
    <property type="project" value="UniProtKB"/>
</dbReference>
<dbReference type="CDD" id="cd07181">
    <property type="entry name" value="RNase_HII_eukaryota_like"/>
    <property type="match status" value="1"/>
</dbReference>
<dbReference type="FunFam" id="1.10.10.460:FF:000001">
    <property type="entry name" value="Ribonuclease"/>
    <property type="match status" value="1"/>
</dbReference>
<dbReference type="FunFam" id="3.30.420.10:FF:000016">
    <property type="entry name" value="Ribonuclease"/>
    <property type="match status" value="1"/>
</dbReference>
<dbReference type="Gene3D" id="3.30.420.10">
    <property type="entry name" value="Ribonuclease H-like superfamily/Ribonuclease H"/>
    <property type="match status" value="1"/>
</dbReference>
<dbReference type="Gene3D" id="1.10.10.460">
    <property type="entry name" value="Ribonuclease hii. Domain 2"/>
    <property type="match status" value="1"/>
</dbReference>
<dbReference type="InterPro" id="IPR004649">
    <property type="entry name" value="RNase_H2_suA"/>
</dbReference>
<dbReference type="InterPro" id="IPR001352">
    <property type="entry name" value="RNase_HII/HIII"/>
</dbReference>
<dbReference type="InterPro" id="IPR024567">
    <property type="entry name" value="RNase_HII/HIII_dom"/>
</dbReference>
<dbReference type="InterPro" id="IPR023160">
    <property type="entry name" value="RNase_HII_hlx-loop-hlx_cap_dom"/>
</dbReference>
<dbReference type="InterPro" id="IPR012337">
    <property type="entry name" value="RNaseH-like_sf"/>
</dbReference>
<dbReference type="InterPro" id="IPR036397">
    <property type="entry name" value="RNaseH_sf"/>
</dbReference>
<dbReference type="NCBIfam" id="TIGR00729">
    <property type="entry name" value="ribonuclease HII"/>
    <property type="match status" value="1"/>
</dbReference>
<dbReference type="PANTHER" id="PTHR10954">
    <property type="entry name" value="RIBONUCLEASE H2 SUBUNIT A"/>
    <property type="match status" value="1"/>
</dbReference>
<dbReference type="PANTHER" id="PTHR10954:SF7">
    <property type="entry name" value="RIBONUCLEASE H2 SUBUNIT A"/>
    <property type="match status" value="1"/>
</dbReference>
<dbReference type="Pfam" id="PF01351">
    <property type="entry name" value="RNase_HII"/>
    <property type="match status" value="1"/>
</dbReference>
<dbReference type="SUPFAM" id="SSF53098">
    <property type="entry name" value="Ribonuclease H-like"/>
    <property type="match status" value="1"/>
</dbReference>
<dbReference type="PROSITE" id="PS51975">
    <property type="entry name" value="RNASE_H_2"/>
    <property type="match status" value="1"/>
</dbReference>